<name>RS21_VIBCM</name>
<reference key="1">
    <citation type="journal article" date="2008" name="PLoS ONE">
        <title>A recalibrated molecular clock and independent origins for the cholera pandemic clones.</title>
        <authorList>
            <person name="Feng L."/>
            <person name="Reeves P.R."/>
            <person name="Lan R."/>
            <person name="Ren Y."/>
            <person name="Gao C."/>
            <person name="Zhou Z."/>
            <person name="Ren Y."/>
            <person name="Cheng J."/>
            <person name="Wang W."/>
            <person name="Wang J."/>
            <person name="Qian W."/>
            <person name="Li D."/>
            <person name="Wang L."/>
        </authorList>
    </citation>
    <scope>NUCLEOTIDE SEQUENCE [LARGE SCALE GENOMIC DNA]</scope>
    <source>
        <strain>M66-2</strain>
    </source>
</reference>
<accession>C3LS10</accession>
<sequence length="71" mass="8487">MPVVKVRENEPFDVALRRFKRSCEKAGILSEVRRREHYEKPTTVRKRAKAAAQKRHAKKLARENARRVRLY</sequence>
<gene>
    <name evidence="1" type="primary">rpsU</name>
    <name type="ordered locus">VCM66_0478</name>
</gene>
<evidence type="ECO:0000255" key="1">
    <source>
        <dbReference type="HAMAP-Rule" id="MF_00358"/>
    </source>
</evidence>
<evidence type="ECO:0000256" key="2">
    <source>
        <dbReference type="SAM" id="MobiDB-lite"/>
    </source>
</evidence>
<evidence type="ECO:0000305" key="3"/>
<proteinExistence type="inferred from homology"/>
<keyword id="KW-0687">Ribonucleoprotein</keyword>
<keyword id="KW-0689">Ribosomal protein</keyword>
<comment type="similarity">
    <text evidence="1">Belongs to the bacterial ribosomal protein bS21 family.</text>
</comment>
<feature type="chain" id="PRO_1000133496" description="Small ribosomal subunit protein bS21">
    <location>
        <begin position="1"/>
        <end position="71"/>
    </location>
</feature>
<feature type="region of interest" description="Disordered" evidence="2">
    <location>
        <begin position="39"/>
        <end position="71"/>
    </location>
</feature>
<feature type="compositionally biased region" description="Basic residues" evidence="2">
    <location>
        <begin position="43"/>
        <end position="59"/>
    </location>
</feature>
<feature type="compositionally biased region" description="Basic and acidic residues" evidence="2">
    <location>
        <begin position="60"/>
        <end position="71"/>
    </location>
</feature>
<dbReference type="EMBL" id="CP001233">
    <property type="protein sequence ID" value="ACP04803.1"/>
    <property type="molecule type" value="Genomic_DNA"/>
</dbReference>
<dbReference type="RefSeq" id="WP_001145625.1">
    <property type="nucleotide sequence ID" value="NC_012578.1"/>
</dbReference>
<dbReference type="SMR" id="C3LS10"/>
<dbReference type="GeneID" id="97540092"/>
<dbReference type="KEGG" id="vcm:VCM66_0478"/>
<dbReference type="HOGENOM" id="CLU_159258_1_0_6"/>
<dbReference type="Proteomes" id="UP000001217">
    <property type="component" value="Chromosome I"/>
</dbReference>
<dbReference type="GO" id="GO:1990904">
    <property type="term" value="C:ribonucleoprotein complex"/>
    <property type="evidence" value="ECO:0007669"/>
    <property type="project" value="UniProtKB-KW"/>
</dbReference>
<dbReference type="GO" id="GO:0005840">
    <property type="term" value="C:ribosome"/>
    <property type="evidence" value="ECO:0007669"/>
    <property type="project" value="UniProtKB-KW"/>
</dbReference>
<dbReference type="GO" id="GO:0003735">
    <property type="term" value="F:structural constituent of ribosome"/>
    <property type="evidence" value="ECO:0007669"/>
    <property type="project" value="InterPro"/>
</dbReference>
<dbReference type="GO" id="GO:0006412">
    <property type="term" value="P:translation"/>
    <property type="evidence" value="ECO:0007669"/>
    <property type="project" value="UniProtKB-UniRule"/>
</dbReference>
<dbReference type="FunFam" id="1.20.5.1150:FF:000001">
    <property type="entry name" value="30S ribosomal protein S21"/>
    <property type="match status" value="1"/>
</dbReference>
<dbReference type="Gene3D" id="1.20.5.1150">
    <property type="entry name" value="Ribosomal protein S8"/>
    <property type="match status" value="1"/>
</dbReference>
<dbReference type="HAMAP" id="MF_00358">
    <property type="entry name" value="Ribosomal_bS21"/>
    <property type="match status" value="1"/>
</dbReference>
<dbReference type="InterPro" id="IPR001911">
    <property type="entry name" value="Ribosomal_bS21"/>
</dbReference>
<dbReference type="InterPro" id="IPR018278">
    <property type="entry name" value="Ribosomal_bS21_CS"/>
</dbReference>
<dbReference type="InterPro" id="IPR038380">
    <property type="entry name" value="Ribosomal_bS21_sf"/>
</dbReference>
<dbReference type="NCBIfam" id="TIGR00030">
    <property type="entry name" value="S21p"/>
    <property type="match status" value="1"/>
</dbReference>
<dbReference type="PANTHER" id="PTHR21109">
    <property type="entry name" value="MITOCHONDRIAL 28S RIBOSOMAL PROTEIN S21"/>
    <property type="match status" value="1"/>
</dbReference>
<dbReference type="PANTHER" id="PTHR21109:SF22">
    <property type="entry name" value="SMALL RIBOSOMAL SUBUNIT PROTEIN BS21"/>
    <property type="match status" value="1"/>
</dbReference>
<dbReference type="Pfam" id="PF01165">
    <property type="entry name" value="Ribosomal_S21"/>
    <property type="match status" value="1"/>
</dbReference>
<dbReference type="PRINTS" id="PR00976">
    <property type="entry name" value="RIBOSOMALS21"/>
</dbReference>
<dbReference type="PROSITE" id="PS01181">
    <property type="entry name" value="RIBOSOMAL_S21"/>
    <property type="match status" value="1"/>
</dbReference>
<organism>
    <name type="scientific">Vibrio cholerae serotype O1 (strain M66-2)</name>
    <dbReference type="NCBI Taxonomy" id="579112"/>
    <lineage>
        <taxon>Bacteria</taxon>
        <taxon>Pseudomonadati</taxon>
        <taxon>Pseudomonadota</taxon>
        <taxon>Gammaproteobacteria</taxon>
        <taxon>Vibrionales</taxon>
        <taxon>Vibrionaceae</taxon>
        <taxon>Vibrio</taxon>
    </lineage>
</organism>
<protein>
    <recommendedName>
        <fullName evidence="1">Small ribosomal subunit protein bS21</fullName>
    </recommendedName>
    <alternativeName>
        <fullName evidence="3">30S ribosomal protein S21</fullName>
    </alternativeName>
</protein>